<organism>
    <name type="scientific">Lactobacillus helveticus (strain DPC 4571)</name>
    <dbReference type="NCBI Taxonomy" id="405566"/>
    <lineage>
        <taxon>Bacteria</taxon>
        <taxon>Bacillati</taxon>
        <taxon>Bacillota</taxon>
        <taxon>Bacilli</taxon>
        <taxon>Lactobacillales</taxon>
        <taxon>Lactobacillaceae</taxon>
        <taxon>Lactobacillus</taxon>
    </lineage>
</organism>
<proteinExistence type="inferred from homology"/>
<name>RF1_LACH4</name>
<comment type="function">
    <text evidence="1">Peptide chain release factor 1 directs the termination of translation in response to the peptide chain termination codons UAG and UAA.</text>
</comment>
<comment type="subcellular location">
    <subcellularLocation>
        <location evidence="1">Cytoplasm</location>
    </subcellularLocation>
</comment>
<comment type="PTM">
    <text evidence="1">Methylated by PrmC. Methylation increases the termination efficiency of RF1.</text>
</comment>
<comment type="similarity">
    <text evidence="1">Belongs to the prokaryotic/mitochondrial release factor family.</text>
</comment>
<feature type="chain" id="PRO_1000071263" description="Peptide chain release factor 1">
    <location>
        <begin position="1"/>
        <end position="362"/>
    </location>
</feature>
<feature type="modified residue" description="N5-methylglutamine" evidence="1">
    <location>
        <position position="236"/>
    </location>
</feature>
<sequence>MDKVMAQLEGLVAHYEELQEMMADPEVINDTKRYMEISKEEADLREVVQKYKKYKEDKKEIADNKEIIANETDSDLIEMAKEENAEIEKEIPELEDQIKILMLPKDPNDDKDIIMEIRGAAGGDEASLFAGDLLRMYEKYAERQNWKVSMIDSEPTEVGGYKRVAIMITGDKVYSKLKYENGAHRVQRIPVTESQGRVHTSTATVAVMPEYEQVDIDIDPKDIRVDVYRSSGAGGQHINKTSSAVRMTHLPTGIVVAMQDQRSQQQNREKAMQILKSRVYDYYESQNQAKYDAKRKNAIGTGDRSERIRTYNYPQNRVTDHRIGLTINKLDRVMNGELDEIIDALILYNQTKQLEELADQNA</sequence>
<gene>
    <name evidence="1" type="primary">prfA</name>
    <name type="ordered locus">lhv_0802</name>
</gene>
<protein>
    <recommendedName>
        <fullName evidence="1">Peptide chain release factor 1</fullName>
        <shortName evidence="1">RF-1</shortName>
    </recommendedName>
</protein>
<reference key="1">
    <citation type="journal article" date="2008" name="J. Bacteriol.">
        <title>Genome sequence of Lactobacillus helveticus: an organism distinguished by selective gene loss and IS element expansion.</title>
        <authorList>
            <person name="Callanan M."/>
            <person name="Kaleta P."/>
            <person name="O'Callaghan J."/>
            <person name="O'Sullivan O."/>
            <person name="Jordan K."/>
            <person name="McAuliffe O."/>
            <person name="Sangrador-Vegas A."/>
            <person name="Slattery L."/>
            <person name="Fitzgerald G.F."/>
            <person name="Beresford T."/>
            <person name="Ross R.P."/>
        </authorList>
    </citation>
    <scope>NUCLEOTIDE SEQUENCE [LARGE SCALE GENOMIC DNA]</scope>
    <source>
        <strain>DPC 4571</strain>
    </source>
</reference>
<dbReference type="EMBL" id="CP000517">
    <property type="protein sequence ID" value="ABX26929.1"/>
    <property type="molecule type" value="Genomic_DNA"/>
</dbReference>
<dbReference type="RefSeq" id="WP_003626148.1">
    <property type="nucleotide sequence ID" value="NC_010080.1"/>
</dbReference>
<dbReference type="SMR" id="A8YUJ1"/>
<dbReference type="KEGG" id="lhe:lhv_0802"/>
<dbReference type="eggNOG" id="COG0216">
    <property type="taxonomic scope" value="Bacteria"/>
</dbReference>
<dbReference type="HOGENOM" id="CLU_036856_0_1_9"/>
<dbReference type="Proteomes" id="UP000000790">
    <property type="component" value="Chromosome"/>
</dbReference>
<dbReference type="GO" id="GO:0005737">
    <property type="term" value="C:cytoplasm"/>
    <property type="evidence" value="ECO:0007669"/>
    <property type="project" value="UniProtKB-SubCell"/>
</dbReference>
<dbReference type="GO" id="GO:0016149">
    <property type="term" value="F:translation release factor activity, codon specific"/>
    <property type="evidence" value="ECO:0007669"/>
    <property type="project" value="UniProtKB-UniRule"/>
</dbReference>
<dbReference type="FunFam" id="3.30.160.20:FF:000004">
    <property type="entry name" value="Peptide chain release factor 1"/>
    <property type="match status" value="1"/>
</dbReference>
<dbReference type="FunFam" id="3.30.70.1660:FF:000002">
    <property type="entry name" value="Peptide chain release factor 1"/>
    <property type="match status" value="1"/>
</dbReference>
<dbReference type="FunFam" id="3.30.70.1660:FF:000004">
    <property type="entry name" value="Peptide chain release factor 1"/>
    <property type="match status" value="1"/>
</dbReference>
<dbReference type="Gene3D" id="3.30.160.20">
    <property type="match status" value="1"/>
</dbReference>
<dbReference type="Gene3D" id="3.30.70.1660">
    <property type="match status" value="1"/>
</dbReference>
<dbReference type="Gene3D" id="6.10.140.1950">
    <property type="match status" value="1"/>
</dbReference>
<dbReference type="HAMAP" id="MF_00093">
    <property type="entry name" value="Rel_fac_1"/>
    <property type="match status" value="1"/>
</dbReference>
<dbReference type="InterPro" id="IPR005139">
    <property type="entry name" value="PCRF"/>
</dbReference>
<dbReference type="InterPro" id="IPR000352">
    <property type="entry name" value="Pep_chain_release_fac_I"/>
</dbReference>
<dbReference type="InterPro" id="IPR045853">
    <property type="entry name" value="Pep_chain_release_fac_I_sf"/>
</dbReference>
<dbReference type="InterPro" id="IPR050057">
    <property type="entry name" value="Prokaryotic/Mito_RF"/>
</dbReference>
<dbReference type="InterPro" id="IPR004373">
    <property type="entry name" value="RF-1"/>
</dbReference>
<dbReference type="NCBIfam" id="TIGR00019">
    <property type="entry name" value="prfA"/>
    <property type="match status" value="1"/>
</dbReference>
<dbReference type="NCBIfam" id="NF001859">
    <property type="entry name" value="PRK00591.1"/>
    <property type="match status" value="1"/>
</dbReference>
<dbReference type="PANTHER" id="PTHR43804">
    <property type="entry name" value="LD18447P"/>
    <property type="match status" value="1"/>
</dbReference>
<dbReference type="PANTHER" id="PTHR43804:SF7">
    <property type="entry name" value="LD18447P"/>
    <property type="match status" value="1"/>
</dbReference>
<dbReference type="Pfam" id="PF03462">
    <property type="entry name" value="PCRF"/>
    <property type="match status" value="1"/>
</dbReference>
<dbReference type="Pfam" id="PF00472">
    <property type="entry name" value="RF-1"/>
    <property type="match status" value="1"/>
</dbReference>
<dbReference type="SMART" id="SM00937">
    <property type="entry name" value="PCRF"/>
    <property type="match status" value="1"/>
</dbReference>
<dbReference type="SUPFAM" id="SSF75620">
    <property type="entry name" value="Release factor"/>
    <property type="match status" value="1"/>
</dbReference>
<dbReference type="PROSITE" id="PS00745">
    <property type="entry name" value="RF_PROK_I"/>
    <property type="match status" value="1"/>
</dbReference>
<accession>A8YUJ1</accession>
<keyword id="KW-0963">Cytoplasm</keyword>
<keyword id="KW-0488">Methylation</keyword>
<keyword id="KW-0648">Protein biosynthesis</keyword>
<evidence type="ECO:0000255" key="1">
    <source>
        <dbReference type="HAMAP-Rule" id="MF_00093"/>
    </source>
</evidence>